<evidence type="ECO:0000255" key="1">
    <source>
        <dbReference type="HAMAP-Rule" id="MF_01333"/>
    </source>
</evidence>
<evidence type="ECO:0000305" key="2"/>
<name>RL5_MICLU</name>
<feature type="chain" id="PRO_0000124945" description="Large ribosomal subunit protein uL5">
    <location>
        <begin position="1"/>
        <end position="191"/>
    </location>
</feature>
<sequence length="191" mass="21674">MTEVQQTEKVTPRLKTKYREEIRGRLQEQFQYGNVMQVPGLVKVVVNMGVGEAAKDSKIIDDAVTDLTAITGQKPMITKARKSIAQFKLREGMPIGTHATLRGDRMWEFLDRLVTLPLPRIRDFRGLSDRQFDGNGNYTFGLSEQTVFHEIDQDKIDRVRGMDITVVTTAKNDDEGRALLKALGFPFKTDQ</sequence>
<keyword id="KW-0687">Ribonucleoprotein</keyword>
<keyword id="KW-0689">Ribosomal protein</keyword>
<keyword id="KW-0694">RNA-binding</keyword>
<keyword id="KW-0699">rRNA-binding</keyword>
<keyword id="KW-0820">tRNA-binding</keyword>
<reference key="1">
    <citation type="journal article" date="1989" name="J. Mol. Evol.">
        <title>Spectinomycin operon of Micrococcus luteus: evolutionary implications of organization and novel codon usage.</title>
        <authorList>
            <person name="Ohama T."/>
            <person name="Muto A."/>
            <person name="Osawa S."/>
        </authorList>
    </citation>
    <scope>NUCLEOTIDE SEQUENCE [GENOMIC DNA]</scope>
</reference>
<gene>
    <name evidence="1" type="primary">rplE</name>
</gene>
<dbReference type="EMBL" id="X17524">
    <property type="protein sequence ID" value="CAA35560.1"/>
    <property type="molecule type" value="Genomic_DNA"/>
</dbReference>
<dbReference type="PIR" id="S29884">
    <property type="entry name" value="S29884"/>
</dbReference>
<dbReference type="SMR" id="P33098"/>
<dbReference type="STRING" id="1232675.GCA_000309825_02145"/>
<dbReference type="GO" id="GO:1990904">
    <property type="term" value="C:ribonucleoprotein complex"/>
    <property type="evidence" value="ECO:0007669"/>
    <property type="project" value="UniProtKB-KW"/>
</dbReference>
<dbReference type="GO" id="GO:0005840">
    <property type="term" value="C:ribosome"/>
    <property type="evidence" value="ECO:0007669"/>
    <property type="project" value="UniProtKB-KW"/>
</dbReference>
<dbReference type="GO" id="GO:0019843">
    <property type="term" value="F:rRNA binding"/>
    <property type="evidence" value="ECO:0007669"/>
    <property type="project" value="UniProtKB-UniRule"/>
</dbReference>
<dbReference type="GO" id="GO:0003735">
    <property type="term" value="F:structural constituent of ribosome"/>
    <property type="evidence" value="ECO:0007669"/>
    <property type="project" value="InterPro"/>
</dbReference>
<dbReference type="GO" id="GO:0000049">
    <property type="term" value="F:tRNA binding"/>
    <property type="evidence" value="ECO:0007669"/>
    <property type="project" value="UniProtKB-UniRule"/>
</dbReference>
<dbReference type="GO" id="GO:0006412">
    <property type="term" value="P:translation"/>
    <property type="evidence" value="ECO:0007669"/>
    <property type="project" value="UniProtKB-UniRule"/>
</dbReference>
<dbReference type="FunFam" id="3.30.1440.10:FF:000001">
    <property type="entry name" value="50S ribosomal protein L5"/>
    <property type="match status" value="1"/>
</dbReference>
<dbReference type="Gene3D" id="3.30.1440.10">
    <property type="match status" value="1"/>
</dbReference>
<dbReference type="HAMAP" id="MF_01333_B">
    <property type="entry name" value="Ribosomal_uL5_B"/>
    <property type="match status" value="1"/>
</dbReference>
<dbReference type="InterPro" id="IPR002132">
    <property type="entry name" value="Ribosomal_uL5"/>
</dbReference>
<dbReference type="InterPro" id="IPR020930">
    <property type="entry name" value="Ribosomal_uL5_bac-type"/>
</dbReference>
<dbReference type="InterPro" id="IPR031309">
    <property type="entry name" value="Ribosomal_uL5_C"/>
</dbReference>
<dbReference type="InterPro" id="IPR020929">
    <property type="entry name" value="Ribosomal_uL5_CS"/>
</dbReference>
<dbReference type="InterPro" id="IPR022803">
    <property type="entry name" value="Ribosomal_uL5_dom_sf"/>
</dbReference>
<dbReference type="InterPro" id="IPR031310">
    <property type="entry name" value="Ribosomal_uL5_N"/>
</dbReference>
<dbReference type="NCBIfam" id="NF000585">
    <property type="entry name" value="PRK00010.1"/>
    <property type="match status" value="1"/>
</dbReference>
<dbReference type="PANTHER" id="PTHR11994">
    <property type="entry name" value="60S RIBOSOMAL PROTEIN L11-RELATED"/>
    <property type="match status" value="1"/>
</dbReference>
<dbReference type="Pfam" id="PF00281">
    <property type="entry name" value="Ribosomal_L5"/>
    <property type="match status" value="1"/>
</dbReference>
<dbReference type="Pfam" id="PF00673">
    <property type="entry name" value="Ribosomal_L5_C"/>
    <property type="match status" value="1"/>
</dbReference>
<dbReference type="PIRSF" id="PIRSF002161">
    <property type="entry name" value="Ribosomal_L5"/>
    <property type="match status" value="1"/>
</dbReference>
<dbReference type="SUPFAM" id="SSF55282">
    <property type="entry name" value="RL5-like"/>
    <property type="match status" value="1"/>
</dbReference>
<dbReference type="PROSITE" id="PS00358">
    <property type="entry name" value="RIBOSOMAL_L5"/>
    <property type="match status" value="1"/>
</dbReference>
<proteinExistence type="inferred from homology"/>
<comment type="function">
    <text evidence="1">This is one of the proteins that bind and probably mediate the attachment of the 5S RNA into the large ribosomal subunit, where it forms part of the central protuberance. In the 70S ribosome it contacts protein S13 of the 30S subunit (bridge B1b), connecting the 2 subunits; this bridge is implicated in subunit movement. Contacts the P site tRNA; the 5S rRNA and some of its associated proteins might help stabilize positioning of ribosome-bound tRNAs.</text>
</comment>
<comment type="subunit">
    <text evidence="1">Part of the 50S ribosomal subunit; part of the 5S rRNA/L5/L18/L25 subcomplex. Contacts the 5S rRNA and the P site tRNA. Forms a bridge to the 30S subunit in the 70S ribosome.</text>
</comment>
<comment type="similarity">
    <text evidence="1">Belongs to the universal ribosomal protein uL5 family.</text>
</comment>
<accession>P33098</accession>
<protein>
    <recommendedName>
        <fullName evidence="1">Large ribosomal subunit protein uL5</fullName>
    </recommendedName>
    <alternativeName>
        <fullName evidence="2">50S ribosomal protein L5</fullName>
    </alternativeName>
</protein>
<organism>
    <name type="scientific">Micrococcus luteus</name>
    <name type="common">Micrococcus lysodeikticus</name>
    <dbReference type="NCBI Taxonomy" id="1270"/>
    <lineage>
        <taxon>Bacteria</taxon>
        <taxon>Bacillati</taxon>
        <taxon>Actinomycetota</taxon>
        <taxon>Actinomycetes</taxon>
        <taxon>Micrococcales</taxon>
        <taxon>Micrococcaceae</taxon>
        <taxon>Micrococcus</taxon>
    </lineage>
</organism>